<reference key="1">
    <citation type="journal article" date="2005" name="Nature">
        <title>The map-based sequence of the rice genome.</title>
        <authorList>
            <consortium name="International rice genome sequencing project (IRGSP)"/>
        </authorList>
    </citation>
    <scope>NUCLEOTIDE SEQUENCE [LARGE SCALE GENOMIC DNA]</scope>
    <source>
        <strain>cv. Nipponbare</strain>
    </source>
</reference>
<reference key="2">
    <citation type="journal article" date="2008" name="Nucleic Acids Res.">
        <title>The rice annotation project database (RAP-DB): 2008 update.</title>
        <authorList>
            <consortium name="The rice annotation project (RAP)"/>
        </authorList>
    </citation>
    <scope>GENOME REANNOTATION</scope>
    <source>
        <strain>cv. Nipponbare</strain>
    </source>
</reference>
<reference key="3">
    <citation type="journal article" date="2013" name="Rice">
        <title>Improvement of the Oryza sativa Nipponbare reference genome using next generation sequence and optical map data.</title>
        <authorList>
            <person name="Kawahara Y."/>
            <person name="de la Bastide M."/>
            <person name="Hamilton J.P."/>
            <person name="Kanamori H."/>
            <person name="McCombie W.R."/>
            <person name="Ouyang S."/>
            <person name="Schwartz D.C."/>
            <person name="Tanaka T."/>
            <person name="Wu J."/>
            <person name="Zhou S."/>
            <person name="Childs K.L."/>
            <person name="Davidson R.M."/>
            <person name="Lin H."/>
            <person name="Quesada-Ocampo L."/>
            <person name="Vaillancourt B."/>
            <person name="Sakai H."/>
            <person name="Lee S.S."/>
            <person name="Kim J."/>
            <person name="Numa H."/>
            <person name="Itoh T."/>
            <person name="Buell C.R."/>
            <person name="Matsumoto T."/>
        </authorList>
    </citation>
    <scope>GENOME REANNOTATION</scope>
    <source>
        <strain>cv. Nipponbare</strain>
    </source>
</reference>
<comment type="catalytic activity">
    <reaction>
        <text>a uridine in RNA = a pseudouridine in RNA</text>
        <dbReference type="Rhea" id="RHEA:48348"/>
        <dbReference type="Rhea" id="RHEA-COMP:12068"/>
        <dbReference type="Rhea" id="RHEA-COMP:12069"/>
        <dbReference type="ChEBI" id="CHEBI:65314"/>
        <dbReference type="ChEBI" id="CHEBI:65315"/>
    </reaction>
</comment>
<comment type="similarity">
    <text evidence="2">Belongs to the pseudouridine synthase RluA family.</text>
</comment>
<comment type="sequence caution" evidence="2">
    <conflict type="erroneous gene model prediction">
        <sequence resource="EMBL-CDS" id="BAF08855"/>
    </conflict>
</comment>
<dbReference type="EC" id="5.4.99.-"/>
<dbReference type="EMBL" id="AP008208">
    <property type="protein sequence ID" value="BAF08855.1"/>
    <property type="status" value="ALT_SEQ"/>
    <property type="molecule type" value="Genomic_DNA"/>
</dbReference>
<dbReference type="EMBL" id="AP014958">
    <property type="status" value="NOT_ANNOTATED_CDS"/>
    <property type="molecule type" value="Genomic_DNA"/>
</dbReference>
<dbReference type="RefSeq" id="XP_015623095.1">
    <property type="nucleotide sequence ID" value="XM_015767609.1"/>
</dbReference>
<dbReference type="SMR" id="Q0E0Y3"/>
<dbReference type="FunCoup" id="Q0E0Y3">
    <property type="interactions" value="2848"/>
</dbReference>
<dbReference type="STRING" id="39947.Q0E0Y3"/>
<dbReference type="PaxDb" id="39947-Q0E0Y3"/>
<dbReference type="eggNOG" id="KOG1919">
    <property type="taxonomic scope" value="Eukaryota"/>
</dbReference>
<dbReference type="InParanoid" id="Q0E0Y3"/>
<dbReference type="OrthoDB" id="424794at2759"/>
<dbReference type="Proteomes" id="UP000000763">
    <property type="component" value="Chromosome 2"/>
</dbReference>
<dbReference type="Proteomes" id="UP000059680">
    <property type="component" value="Chromosome 2"/>
</dbReference>
<dbReference type="GO" id="GO:0009982">
    <property type="term" value="F:pseudouridine synthase activity"/>
    <property type="evidence" value="ECO:0000318"/>
    <property type="project" value="GO_Central"/>
</dbReference>
<dbReference type="GO" id="GO:0003723">
    <property type="term" value="F:RNA binding"/>
    <property type="evidence" value="ECO:0007669"/>
    <property type="project" value="UniProtKB-KW"/>
</dbReference>
<dbReference type="GO" id="GO:0000455">
    <property type="term" value="P:enzyme-directed rRNA pseudouridine synthesis"/>
    <property type="evidence" value="ECO:0000318"/>
    <property type="project" value="GO_Central"/>
</dbReference>
<dbReference type="CDD" id="cd02557">
    <property type="entry name" value="PseudoU_synth_ScRIB2"/>
    <property type="match status" value="1"/>
</dbReference>
<dbReference type="FunFam" id="3.30.2350.10:FF:000036">
    <property type="entry name" value="Pseudouridine synthase"/>
    <property type="match status" value="1"/>
</dbReference>
<dbReference type="Gene3D" id="3.30.2350.10">
    <property type="entry name" value="Pseudouridine synthase"/>
    <property type="match status" value="1"/>
</dbReference>
<dbReference type="InterPro" id="IPR020103">
    <property type="entry name" value="PsdUridine_synth_cat_dom_sf"/>
</dbReference>
<dbReference type="InterPro" id="IPR006224">
    <property type="entry name" value="PsdUridine_synth_RluA-like_CS"/>
</dbReference>
<dbReference type="InterPro" id="IPR006225">
    <property type="entry name" value="PsdUridine_synth_RluC/D"/>
</dbReference>
<dbReference type="InterPro" id="IPR006145">
    <property type="entry name" value="PsdUridine_synth_RsuA/RluA"/>
</dbReference>
<dbReference type="InterPro" id="IPR050188">
    <property type="entry name" value="RluA_PseudoU_synthase"/>
</dbReference>
<dbReference type="NCBIfam" id="TIGR00005">
    <property type="entry name" value="rluA_subfam"/>
    <property type="match status" value="1"/>
</dbReference>
<dbReference type="PANTHER" id="PTHR21600">
    <property type="entry name" value="MITOCHONDRIAL RNA PSEUDOURIDINE SYNTHASE"/>
    <property type="match status" value="1"/>
</dbReference>
<dbReference type="PANTHER" id="PTHR21600:SF40">
    <property type="entry name" value="PSEUDOURIDYLATE SYNTHASE RPUSD2"/>
    <property type="match status" value="1"/>
</dbReference>
<dbReference type="Pfam" id="PF00849">
    <property type="entry name" value="PseudoU_synth_2"/>
    <property type="match status" value="1"/>
</dbReference>
<dbReference type="SUPFAM" id="SSF55120">
    <property type="entry name" value="Pseudouridine synthase"/>
    <property type="match status" value="1"/>
</dbReference>
<dbReference type="PROSITE" id="PS01129">
    <property type="entry name" value="PSI_RLU"/>
    <property type="match status" value="1"/>
</dbReference>
<name>PUS7_ORYSJ</name>
<protein>
    <recommendedName>
        <fullName>RNA pseudouridine synthase 7</fullName>
        <ecNumber>5.4.99.-</ecNumber>
    </recommendedName>
    <alternativeName>
        <fullName>RNA pseudouridylate synthase 7</fullName>
    </alternativeName>
    <alternativeName>
        <fullName>RNA-uridine isomerase 7</fullName>
    </alternativeName>
</protein>
<evidence type="ECO:0000250" key="1"/>
<evidence type="ECO:0000305" key="2"/>
<gene>
    <name type="ordered locus">Os02g0512300</name>
    <name type="ordered locus">LOC_Os02g30840</name>
</gene>
<organism>
    <name type="scientific">Oryza sativa subsp. japonica</name>
    <name type="common">Rice</name>
    <dbReference type="NCBI Taxonomy" id="39947"/>
    <lineage>
        <taxon>Eukaryota</taxon>
        <taxon>Viridiplantae</taxon>
        <taxon>Streptophyta</taxon>
        <taxon>Embryophyta</taxon>
        <taxon>Tracheophyta</taxon>
        <taxon>Spermatophyta</taxon>
        <taxon>Magnoliopsida</taxon>
        <taxon>Liliopsida</taxon>
        <taxon>Poales</taxon>
        <taxon>Poaceae</taxon>
        <taxon>BOP clade</taxon>
        <taxon>Oryzoideae</taxon>
        <taxon>Oryzeae</taxon>
        <taxon>Oryzinae</taxon>
        <taxon>Oryza</taxon>
        <taxon>Oryza sativa</taxon>
    </lineage>
</organism>
<sequence length="393" mass="44059">MAAGPAGIVWQTPANPPERQDYIFRDGRRYVRPYYFEFISHVKNRWAGKTIVDLFTDEFKGRPREYYVHAVKCGRLQVDDQMVHADYVVQSSQKISHFLHRHEPPVLGGDITILQNEADVVTVCKPASVPVHPCGQYRKNTVVGILQAEHGLVPLFPVHRLDRLVSGLLIFAKNADKAESFRQQIEASLLQKEYVAKVVGVFPDGEQTVNANVHFNAREGRSTAEVCDGDGKAPIGKQACTKFQRICTDGIHSIVLCKPVTGRTHQIRVHLKHIGYPIANDEVYLSENFSPRSSKGTRINRATTLACSLPSSDPDSCADLGNNDTNEDTEADEEFSIDPMCTNCPNLAPVGYDADEEALWLHCVRYTGPDWSYECPYPDWAFLDNVSRKKLKS</sequence>
<keyword id="KW-0413">Isomerase</keyword>
<keyword id="KW-1185">Reference proteome</keyword>
<keyword id="KW-0694">RNA-binding</keyword>
<accession>Q0E0Y3</accession>
<feature type="chain" id="PRO_0000368028" description="RNA pseudouridine synthase 7">
    <location>
        <begin position="1"/>
        <end position="393"/>
    </location>
</feature>
<feature type="domain" description="S4 RNA-binding">
    <location>
        <begin position="49"/>
        <end position="118"/>
    </location>
</feature>
<feature type="active site" evidence="1">
    <location>
        <position position="162"/>
    </location>
</feature>
<proteinExistence type="evidence at transcript level"/>